<protein>
    <recommendedName>
        <fullName evidence="1">Phospho-N-acetylmuramoyl-pentapeptide-transferase</fullName>
        <ecNumber evidence="1">2.7.8.13</ecNumber>
    </recommendedName>
    <alternativeName>
        <fullName evidence="1">UDP-MurNAc-pentapeptide phosphotransferase</fullName>
    </alternativeName>
</protein>
<dbReference type="EC" id="2.7.8.13" evidence="1"/>
<dbReference type="EMBL" id="CP000283">
    <property type="protein sequence ID" value="ABE40621.1"/>
    <property type="molecule type" value="Genomic_DNA"/>
</dbReference>
<dbReference type="SMR" id="Q133W8"/>
<dbReference type="STRING" id="316057.RPD_3397"/>
<dbReference type="KEGG" id="rpd:RPD_3397"/>
<dbReference type="eggNOG" id="COG0472">
    <property type="taxonomic scope" value="Bacteria"/>
</dbReference>
<dbReference type="HOGENOM" id="CLU_023982_0_0_5"/>
<dbReference type="BioCyc" id="RPAL316057:RPD_RS17085-MONOMER"/>
<dbReference type="UniPathway" id="UPA00219"/>
<dbReference type="Proteomes" id="UP000001818">
    <property type="component" value="Chromosome"/>
</dbReference>
<dbReference type="GO" id="GO:0005886">
    <property type="term" value="C:plasma membrane"/>
    <property type="evidence" value="ECO:0007669"/>
    <property type="project" value="UniProtKB-SubCell"/>
</dbReference>
<dbReference type="GO" id="GO:0046872">
    <property type="term" value="F:metal ion binding"/>
    <property type="evidence" value="ECO:0007669"/>
    <property type="project" value="UniProtKB-KW"/>
</dbReference>
<dbReference type="GO" id="GO:0008963">
    <property type="term" value="F:phospho-N-acetylmuramoyl-pentapeptide-transferase activity"/>
    <property type="evidence" value="ECO:0007669"/>
    <property type="project" value="UniProtKB-UniRule"/>
</dbReference>
<dbReference type="GO" id="GO:0051992">
    <property type="term" value="F:UDP-N-acetylmuramoyl-L-alanyl-D-glutamyl-meso-2,6-diaminopimelyl-D-alanyl-D-alanine:undecaprenyl-phosphate transferase activity"/>
    <property type="evidence" value="ECO:0007669"/>
    <property type="project" value="RHEA"/>
</dbReference>
<dbReference type="GO" id="GO:0051301">
    <property type="term" value="P:cell division"/>
    <property type="evidence" value="ECO:0007669"/>
    <property type="project" value="UniProtKB-KW"/>
</dbReference>
<dbReference type="GO" id="GO:0071555">
    <property type="term" value="P:cell wall organization"/>
    <property type="evidence" value="ECO:0007669"/>
    <property type="project" value="UniProtKB-KW"/>
</dbReference>
<dbReference type="GO" id="GO:0009252">
    <property type="term" value="P:peptidoglycan biosynthetic process"/>
    <property type="evidence" value="ECO:0007669"/>
    <property type="project" value="UniProtKB-UniRule"/>
</dbReference>
<dbReference type="GO" id="GO:0008360">
    <property type="term" value="P:regulation of cell shape"/>
    <property type="evidence" value="ECO:0007669"/>
    <property type="project" value="UniProtKB-KW"/>
</dbReference>
<dbReference type="CDD" id="cd06852">
    <property type="entry name" value="GT_MraY"/>
    <property type="match status" value="1"/>
</dbReference>
<dbReference type="HAMAP" id="MF_00038">
    <property type="entry name" value="MraY"/>
    <property type="match status" value="1"/>
</dbReference>
<dbReference type="InterPro" id="IPR000715">
    <property type="entry name" value="Glycosyl_transferase_4"/>
</dbReference>
<dbReference type="InterPro" id="IPR003524">
    <property type="entry name" value="PNAcMuramoyl-5peptid_Trfase"/>
</dbReference>
<dbReference type="InterPro" id="IPR018480">
    <property type="entry name" value="PNAcMuramoyl-5peptid_Trfase_CS"/>
</dbReference>
<dbReference type="NCBIfam" id="TIGR00445">
    <property type="entry name" value="mraY"/>
    <property type="match status" value="1"/>
</dbReference>
<dbReference type="PANTHER" id="PTHR22926">
    <property type="entry name" value="PHOSPHO-N-ACETYLMURAMOYL-PENTAPEPTIDE-TRANSFERASE"/>
    <property type="match status" value="1"/>
</dbReference>
<dbReference type="PANTHER" id="PTHR22926:SF5">
    <property type="entry name" value="PHOSPHO-N-ACETYLMURAMOYL-PENTAPEPTIDE-TRANSFERASE HOMOLOG"/>
    <property type="match status" value="1"/>
</dbReference>
<dbReference type="Pfam" id="PF00953">
    <property type="entry name" value="Glycos_transf_4"/>
    <property type="match status" value="1"/>
</dbReference>
<dbReference type="Pfam" id="PF10555">
    <property type="entry name" value="MraY_sig1"/>
    <property type="match status" value="1"/>
</dbReference>
<dbReference type="PROSITE" id="PS01347">
    <property type="entry name" value="MRAY_1"/>
    <property type="match status" value="1"/>
</dbReference>
<dbReference type="PROSITE" id="PS01348">
    <property type="entry name" value="MRAY_2"/>
    <property type="match status" value="1"/>
</dbReference>
<sequence length="361" mass="38560">MLYWLIDLSSSIPAFNVFRYITFRTGGAVVTGALFVFLCGPWIINNLRLRQGKGQPIRSDGPQSHLVTKKGTPTMGGLMILSGLTVGTVLWANPVNPYVWIVLAVTLGFGFVGFYDDYMKVTKQTHAGISGRTRLLIEFAIAGAACFALVWLGRSSLSSSLVIPFFKEVVLNLGWYFVIFGAFVIVGAGNAVNLTDGLDGLAIVPVMIAAASFGLIAYLAGNAVFADYLQINYVAGTGELAVLCGALLGAGLGFLWFNAPPASIFMGDTGSLALGGMLGSIAVAVKHEIVLAVIGGLFVLEAVSVIVQVASFKLTGKRVFRMAPIHHHFEQKGWTEPQIVIRFWIIAVMLALAGLATLKLR</sequence>
<feature type="chain" id="PRO_1000003043" description="Phospho-N-acetylmuramoyl-pentapeptide-transferase">
    <location>
        <begin position="1"/>
        <end position="361"/>
    </location>
</feature>
<feature type="transmembrane region" description="Helical" evidence="1">
    <location>
        <begin position="25"/>
        <end position="45"/>
    </location>
</feature>
<feature type="transmembrane region" description="Helical" evidence="1">
    <location>
        <begin position="72"/>
        <end position="92"/>
    </location>
</feature>
<feature type="transmembrane region" description="Helical" evidence="1">
    <location>
        <begin position="95"/>
        <end position="115"/>
    </location>
</feature>
<feature type="transmembrane region" description="Helical" evidence="1">
    <location>
        <begin position="133"/>
        <end position="153"/>
    </location>
</feature>
<feature type="transmembrane region" description="Helical" evidence="1">
    <location>
        <begin position="169"/>
        <end position="189"/>
    </location>
</feature>
<feature type="transmembrane region" description="Helical" evidence="1">
    <location>
        <begin position="200"/>
        <end position="220"/>
    </location>
</feature>
<feature type="transmembrane region" description="Helical" evidence="1">
    <location>
        <begin position="240"/>
        <end position="260"/>
    </location>
</feature>
<feature type="transmembrane region" description="Helical" evidence="1">
    <location>
        <begin position="264"/>
        <end position="284"/>
    </location>
</feature>
<feature type="transmembrane region" description="Helical" evidence="1">
    <location>
        <begin position="289"/>
        <end position="309"/>
    </location>
</feature>
<feature type="transmembrane region" description="Helical" evidence="1">
    <location>
        <begin position="338"/>
        <end position="358"/>
    </location>
</feature>
<reference key="1">
    <citation type="submission" date="2006-03" db="EMBL/GenBank/DDBJ databases">
        <title>Complete sequence of Rhodopseudomonas palustris BisB5.</title>
        <authorList>
            <consortium name="US DOE Joint Genome Institute"/>
            <person name="Copeland A."/>
            <person name="Lucas S."/>
            <person name="Lapidus A."/>
            <person name="Barry K."/>
            <person name="Detter J.C."/>
            <person name="Glavina del Rio T."/>
            <person name="Hammon N."/>
            <person name="Israni S."/>
            <person name="Dalin E."/>
            <person name="Tice H."/>
            <person name="Pitluck S."/>
            <person name="Chain P."/>
            <person name="Malfatti S."/>
            <person name="Shin M."/>
            <person name="Vergez L."/>
            <person name="Schmutz J."/>
            <person name="Larimer F."/>
            <person name="Land M."/>
            <person name="Hauser L."/>
            <person name="Pelletier D.A."/>
            <person name="Kyrpides N."/>
            <person name="Lykidis A."/>
            <person name="Oda Y."/>
            <person name="Harwood C.S."/>
            <person name="Richardson P."/>
        </authorList>
    </citation>
    <scope>NUCLEOTIDE SEQUENCE [LARGE SCALE GENOMIC DNA]</scope>
    <source>
        <strain>BisB5</strain>
    </source>
</reference>
<evidence type="ECO:0000255" key="1">
    <source>
        <dbReference type="HAMAP-Rule" id="MF_00038"/>
    </source>
</evidence>
<name>MRAY_RHOPS</name>
<gene>
    <name evidence="1" type="primary">mraY</name>
    <name type="ordered locus">RPD_3397</name>
</gene>
<comment type="function">
    <text evidence="1">Catalyzes the initial step of the lipid cycle reactions in the biosynthesis of the cell wall peptidoglycan: transfers peptidoglycan precursor phospho-MurNAc-pentapeptide from UDP-MurNAc-pentapeptide onto the lipid carrier undecaprenyl phosphate, yielding undecaprenyl-pyrophosphoryl-MurNAc-pentapeptide, known as lipid I.</text>
</comment>
<comment type="catalytic activity">
    <reaction evidence="1">
        <text>UDP-N-acetyl-alpha-D-muramoyl-L-alanyl-gamma-D-glutamyl-meso-2,6-diaminopimeloyl-D-alanyl-D-alanine + di-trans,octa-cis-undecaprenyl phosphate = di-trans,octa-cis-undecaprenyl diphospho-N-acetyl-alpha-D-muramoyl-L-alanyl-D-glutamyl-meso-2,6-diaminopimeloyl-D-alanyl-D-alanine + UMP</text>
        <dbReference type="Rhea" id="RHEA:28386"/>
        <dbReference type="ChEBI" id="CHEBI:57865"/>
        <dbReference type="ChEBI" id="CHEBI:60392"/>
        <dbReference type="ChEBI" id="CHEBI:61386"/>
        <dbReference type="ChEBI" id="CHEBI:61387"/>
        <dbReference type="EC" id="2.7.8.13"/>
    </reaction>
</comment>
<comment type="cofactor">
    <cofactor evidence="1">
        <name>Mg(2+)</name>
        <dbReference type="ChEBI" id="CHEBI:18420"/>
    </cofactor>
</comment>
<comment type="pathway">
    <text evidence="1">Cell wall biogenesis; peptidoglycan biosynthesis.</text>
</comment>
<comment type="subcellular location">
    <subcellularLocation>
        <location evidence="1">Cell inner membrane</location>
        <topology evidence="1">Multi-pass membrane protein</topology>
    </subcellularLocation>
</comment>
<comment type="similarity">
    <text evidence="1">Belongs to the glycosyltransferase 4 family. MraY subfamily.</text>
</comment>
<proteinExistence type="inferred from homology"/>
<keyword id="KW-0131">Cell cycle</keyword>
<keyword id="KW-0132">Cell division</keyword>
<keyword id="KW-0997">Cell inner membrane</keyword>
<keyword id="KW-1003">Cell membrane</keyword>
<keyword id="KW-0133">Cell shape</keyword>
<keyword id="KW-0961">Cell wall biogenesis/degradation</keyword>
<keyword id="KW-0460">Magnesium</keyword>
<keyword id="KW-0472">Membrane</keyword>
<keyword id="KW-0479">Metal-binding</keyword>
<keyword id="KW-0573">Peptidoglycan synthesis</keyword>
<keyword id="KW-0808">Transferase</keyword>
<keyword id="KW-0812">Transmembrane</keyword>
<keyword id="KW-1133">Transmembrane helix</keyword>
<accession>Q133W8</accession>
<organism>
    <name type="scientific">Rhodopseudomonas palustris (strain BisB5)</name>
    <dbReference type="NCBI Taxonomy" id="316057"/>
    <lineage>
        <taxon>Bacteria</taxon>
        <taxon>Pseudomonadati</taxon>
        <taxon>Pseudomonadota</taxon>
        <taxon>Alphaproteobacteria</taxon>
        <taxon>Hyphomicrobiales</taxon>
        <taxon>Nitrobacteraceae</taxon>
        <taxon>Rhodopseudomonas</taxon>
    </lineage>
</organism>